<keyword id="KW-0067">ATP-binding</keyword>
<keyword id="KW-0418">Kinase</keyword>
<keyword id="KW-0547">Nucleotide-binding</keyword>
<keyword id="KW-0597">Phosphoprotein</keyword>
<keyword id="KW-0611">Plant defense</keyword>
<keyword id="KW-1185">Reference proteome</keyword>
<keyword id="KW-0723">Serine/threonine-protein kinase</keyword>
<keyword id="KW-0808">Transferase</keyword>
<evidence type="ECO:0000250" key="1"/>
<evidence type="ECO:0000255" key="2">
    <source>
        <dbReference type="PROSITE-ProRule" id="PRU00159"/>
    </source>
</evidence>
<evidence type="ECO:0000255" key="3">
    <source>
        <dbReference type="PROSITE-ProRule" id="PRU10027"/>
    </source>
</evidence>
<evidence type="ECO:0000269" key="4">
    <source>
    </source>
</evidence>
<evidence type="ECO:0000269" key="5">
    <source>
    </source>
</evidence>
<evidence type="ECO:0000305" key="6"/>
<proteinExistence type="evidence at protein level"/>
<feature type="chain" id="PRO_0000300870" description="Mitogen-activated protein kinase 5">
    <location>
        <begin position="1"/>
        <end position="369"/>
    </location>
</feature>
<feature type="domain" description="Protein kinase" evidence="2">
    <location>
        <begin position="36"/>
        <end position="322"/>
    </location>
</feature>
<feature type="short sequence motif" description="TXY">
    <location>
        <begin position="194"/>
        <end position="196"/>
    </location>
</feature>
<feature type="active site" description="Proton acceptor" evidence="2 3">
    <location>
        <position position="162"/>
    </location>
</feature>
<feature type="binding site" evidence="2">
    <location>
        <begin position="42"/>
        <end position="50"/>
    </location>
    <ligand>
        <name>ATP</name>
        <dbReference type="ChEBI" id="CHEBI:30616"/>
    </ligand>
</feature>
<feature type="binding site" evidence="2">
    <location>
        <position position="65"/>
    </location>
    <ligand>
        <name>ATP</name>
        <dbReference type="ChEBI" id="CHEBI:30616"/>
    </ligand>
</feature>
<feature type="modified residue" description="Phosphothreonine" evidence="1">
    <location>
        <position position="194"/>
    </location>
</feature>
<feature type="modified residue" description="Phosphotyrosine" evidence="1">
    <location>
        <position position="196"/>
    </location>
</feature>
<feature type="sequence conflict" description="In Ref. 2; ABH01189." evidence="6" ref="2">
    <original>F</original>
    <variation>I</variation>
    <location>
        <position position="340"/>
    </location>
</feature>
<feature type="sequence conflict" description="In Ref. 1; AAK01710." evidence="6" ref="1">
    <original>I</original>
    <variation>F</variation>
    <location>
        <position position="367"/>
    </location>
</feature>
<reference key="1">
    <citation type="journal article" date="2002" name="Planta">
        <title>OsBIMK1, a rice MAP kinase gene involved in disease resistance responses.</title>
        <authorList>
            <person name="Song F."/>
            <person name="Goodman R.M."/>
        </authorList>
    </citation>
    <scope>NUCLEOTIDE SEQUENCE [MRNA]</scope>
    <scope>INDUCTION</scope>
    <source>
        <strain>cv. Yuanfengzao</strain>
    </source>
</reference>
<reference key="2">
    <citation type="submission" date="2006-06" db="EMBL/GenBank/DDBJ databases">
        <title>Oryza sativa (indica cultivar-group) mitogen activated protein kinase 3 (MPK3) mRNA.</title>
        <authorList>
            <person name="Rao K.P."/>
            <person name="Kumar K."/>
            <person name="Sharma P."/>
            <person name="Sinha A.K."/>
        </authorList>
    </citation>
    <scope>NUCLEOTIDE SEQUENCE [MRNA]</scope>
    <source>
        <strain>cv. Pusa Basmati</strain>
    </source>
</reference>
<reference key="3">
    <citation type="journal article" date="2005" name="PLoS Biol.">
        <title>The genomes of Oryza sativa: a history of duplications.</title>
        <authorList>
            <person name="Yu J."/>
            <person name="Wang J."/>
            <person name="Lin W."/>
            <person name="Li S."/>
            <person name="Li H."/>
            <person name="Zhou J."/>
            <person name="Ni P."/>
            <person name="Dong W."/>
            <person name="Hu S."/>
            <person name="Zeng C."/>
            <person name="Zhang J."/>
            <person name="Zhang Y."/>
            <person name="Li R."/>
            <person name="Xu Z."/>
            <person name="Li S."/>
            <person name="Li X."/>
            <person name="Zheng H."/>
            <person name="Cong L."/>
            <person name="Lin L."/>
            <person name="Yin J."/>
            <person name="Geng J."/>
            <person name="Li G."/>
            <person name="Shi J."/>
            <person name="Liu J."/>
            <person name="Lv H."/>
            <person name="Li J."/>
            <person name="Wang J."/>
            <person name="Deng Y."/>
            <person name="Ran L."/>
            <person name="Shi X."/>
            <person name="Wang X."/>
            <person name="Wu Q."/>
            <person name="Li C."/>
            <person name="Ren X."/>
            <person name="Wang J."/>
            <person name="Wang X."/>
            <person name="Li D."/>
            <person name="Liu D."/>
            <person name="Zhang X."/>
            <person name="Ji Z."/>
            <person name="Zhao W."/>
            <person name="Sun Y."/>
            <person name="Zhang Z."/>
            <person name="Bao J."/>
            <person name="Han Y."/>
            <person name="Dong L."/>
            <person name="Ji J."/>
            <person name="Chen P."/>
            <person name="Wu S."/>
            <person name="Liu J."/>
            <person name="Xiao Y."/>
            <person name="Bu D."/>
            <person name="Tan J."/>
            <person name="Yang L."/>
            <person name="Ye C."/>
            <person name="Zhang J."/>
            <person name="Xu J."/>
            <person name="Zhou Y."/>
            <person name="Yu Y."/>
            <person name="Zhang B."/>
            <person name="Zhuang S."/>
            <person name="Wei H."/>
            <person name="Liu B."/>
            <person name="Lei M."/>
            <person name="Yu H."/>
            <person name="Li Y."/>
            <person name="Xu H."/>
            <person name="Wei S."/>
            <person name="He X."/>
            <person name="Fang L."/>
            <person name="Zhang Z."/>
            <person name="Zhang Y."/>
            <person name="Huang X."/>
            <person name="Su Z."/>
            <person name="Tong W."/>
            <person name="Li J."/>
            <person name="Tong Z."/>
            <person name="Li S."/>
            <person name="Ye J."/>
            <person name="Wang L."/>
            <person name="Fang L."/>
            <person name="Lei T."/>
            <person name="Chen C.-S."/>
            <person name="Chen H.-C."/>
            <person name="Xu Z."/>
            <person name="Li H."/>
            <person name="Huang H."/>
            <person name="Zhang F."/>
            <person name="Xu H."/>
            <person name="Li N."/>
            <person name="Zhao C."/>
            <person name="Li S."/>
            <person name="Dong L."/>
            <person name="Huang Y."/>
            <person name="Li L."/>
            <person name="Xi Y."/>
            <person name="Qi Q."/>
            <person name="Li W."/>
            <person name="Zhang B."/>
            <person name="Hu W."/>
            <person name="Zhang Y."/>
            <person name="Tian X."/>
            <person name="Jiao Y."/>
            <person name="Liang X."/>
            <person name="Jin J."/>
            <person name="Gao L."/>
            <person name="Zheng W."/>
            <person name="Hao B."/>
            <person name="Liu S.-M."/>
            <person name="Wang W."/>
            <person name="Yuan L."/>
            <person name="Cao M."/>
            <person name="McDermott J."/>
            <person name="Samudrala R."/>
            <person name="Wang J."/>
            <person name="Wong G.K.-S."/>
            <person name="Yang H."/>
        </authorList>
    </citation>
    <scope>NUCLEOTIDE SEQUENCE [LARGE SCALE GENOMIC DNA]</scope>
    <source>
        <strain>cv. 93-11</strain>
    </source>
</reference>
<reference key="4">
    <citation type="journal article" date="2002" name="Plant Physiol.">
        <title>Two novel mitogen-activated protein signaling components, OsMEK1 and OsMAP1, are involved in a moderate low-temperature signaling pathway in rice.</title>
        <authorList>
            <person name="Wen J.-Q."/>
            <person name="Oono K."/>
            <person name="Imai R."/>
        </authorList>
    </citation>
    <scope>INTERACTION WITH MKK1</scope>
</reference>
<reference key="5">
    <citation type="journal article" date="2006" name="Mol. Plant Microbe Interact.">
        <title>Molecular analysis of the rice MAP kinase gene family in relation to Magnaporthe grisea infection.</title>
        <authorList>
            <person name="Reyna N.S."/>
            <person name="Yang Y."/>
        </authorList>
    </citation>
    <scope>NOMENCLATURE</scope>
</reference>
<name>MPK5_ORYSI</name>
<comment type="function">
    <text evidence="1">Involved in disease resistance and abiotic stress tolerance signaling pathways.</text>
</comment>
<comment type="catalytic activity">
    <reaction>
        <text>L-seryl-[protein] + ATP = O-phospho-L-seryl-[protein] + ADP + H(+)</text>
        <dbReference type="Rhea" id="RHEA:17989"/>
        <dbReference type="Rhea" id="RHEA-COMP:9863"/>
        <dbReference type="Rhea" id="RHEA-COMP:11604"/>
        <dbReference type="ChEBI" id="CHEBI:15378"/>
        <dbReference type="ChEBI" id="CHEBI:29999"/>
        <dbReference type="ChEBI" id="CHEBI:30616"/>
        <dbReference type="ChEBI" id="CHEBI:83421"/>
        <dbReference type="ChEBI" id="CHEBI:456216"/>
        <dbReference type="EC" id="2.7.11.24"/>
    </reaction>
</comment>
<comment type="catalytic activity">
    <reaction>
        <text>L-threonyl-[protein] + ATP = O-phospho-L-threonyl-[protein] + ADP + H(+)</text>
        <dbReference type="Rhea" id="RHEA:46608"/>
        <dbReference type="Rhea" id="RHEA-COMP:11060"/>
        <dbReference type="Rhea" id="RHEA-COMP:11605"/>
        <dbReference type="ChEBI" id="CHEBI:15378"/>
        <dbReference type="ChEBI" id="CHEBI:30013"/>
        <dbReference type="ChEBI" id="CHEBI:30616"/>
        <dbReference type="ChEBI" id="CHEBI:61977"/>
        <dbReference type="ChEBI" id="CHEBI:456216"/>
        <dbReference type="EC" id="2.7.11.24"/>
    </reaction>
</comment>
<comment type="activity regulation">
    <text evidence="1">Activated by threonine and tyrosine phosphorylation.</text>
</comment>
<comment type="subunit">
    <text evidence="4">Interacts with MKK1.</text>
</comment>
<comment type="induction">
    <text evidence="5">By benzothiadiazole (BTH), dichloroisonicotinic acid, probenazole, jasmonic acid, wounding and infection with P.syringae and M.grisea.</text>
</comment>
<comment type="domain">
    <text>The TXY motif contains the threonine and tyrosine residues whose phosphorylation activates the MAP kinases.</text>
</comment>
<comment type="PTM">
    <text evidence="1">Dually phosphorylated on Thr-194 and Tyr-196, which activates the enzyme.</text>
</comment>
<comment type="similarity">
    <text evidence="6">Belongs to the protein kinase superfamily. CMGC Ser/Thr protein kinase family. MAP kinase subfamily.</text>
</comment>
<sequence length="369" mass="42995">MDGAPVAEFRPTMTHGGRYLLYDIFGNKFEVTNKYQPPIMPIGRGAYGIVCSVMNFETREMVAIKKIANAFNNDMDAKRTLREIKLLRHLDHENIIGIRDVIPPPIPQAFNDVYIATELMDTDLHHIIRSNQELSEEHCQYFLYQILRGLKYIHSANVIHRDLKPSNLLLNANCDLKICDFGLARPSSESDMMTEYVVTRWYRAPELLLNSTDYSAAIDVWSVGCIFMELINRQPLFPGRDHMHQMRLITEVIGTPTDDELGFIRNEDARKYMRHLPQYPRRTFASMFPRVQPAALDLIERMLTFNPLQRITVEEALDHPYLERLHDIADEPICLEPFSFDFEQKALNEDQMKQLIFNEAIEMNPNIRY</sequence>
<organism>
    <name type="scientific">Oryza sativa subsp. indica</name>
    <name type="common">Rice</name>
    <dbReference type="NCBI Taxonomy" id="39946"/>
    <lineage>
        <taxon>Eukaryota</taxon>
        <taxon>Viridiplantae</taxon>
        <taxon>Streptophyta</taxon>
        <taxon>Embryophyta</taxon>
        <taxon>Tracheophyta</taxon>
        <taxon>Spermatophyta</taxon>
        <taxon>Magnoliopsida</taxon>
        <taxon>Liliopsida</taxon>
        <taxon>Poales</taxon>
        <taxon>Poaceae</taxon>
        <taxon>BOP clade</taxon>
        <taxon>Oryzoideae</taxon>
        <taxon>Oryzeae</taxon>
        <taxon>Oryzinae</taxon>
        <taxon>Oryza</taxon>
        <taxon>Oryza sativa</taxon>
    </lineage>
</organism>
<dbReference type="EC" id="2.7.11.24"/>
<dbReference type="EMBL" id="AF332873">
    <property type="protein sequence ID" value="AAK01710.1"/>
    <property type="molecule type" value="mRNA"/>
</dbReference>
<dbReference type="EMBL" id="DQ826422">
    <property type="protein sequence ID" value="ABH01189.1"/>
    <property type="molecule type" value="mRNA"/>
</dbReference>
<dbReference type="EMBL" id="CM000128">
    <property type="status" value="NOT_ANNOTATED_CDS"/>
    <property type="molecule type" value="Genomic_DNA"/>
</dbReference>
<dbReference type="SMR" id="A2XFC8"/>
<dbReference type="STRING" id="39946.A2XFC8"/>
<dbReference type="Proteomes" id="UP000007015">
    <property type="component" value="Chromosome 3"/>
</dbReference>
<dbReference type="GO" id="GO:0005524">
    <property type="term" value="F:ATP binding"/>
    <property type="evidence" value="ECO:0007669"/>
    <property type="project" value="UniProtKB-KW"/>
</dbReference>
<dbReference type="GO" id="GO:0004707">
    <property type="term" value="F:MAP kinase activity"/>
    <property type="evidence" value="ECO:0007669"/>
    <property type="project" value="UniProtKB-EC"/>
</dbReference>
<dbReference type="GO" id="GO:0106310">
    <property type="term" value="F:protein serine kinase activity"/>
    <property type="evidence" value="ECO:0007669"/>
    <property type="project" value="RHEA"/>
</dbReference>
<dbReference type="GO" id="GO:0006952">
    <property type="term" value="P:defense response"/>
    <property type="evidence" value="ECO:0007669"/>
    <property type="project" value="UniProtKB-KW"/>
</dbReference>
<dbReference type="FunFam" id="1.10.510.10:FF:000013">
    <property type="entry name" value="Mitogen-activated protein kinase"/>
    <property type="match status" value="1"/>
</dbReference>
<dbReference type="FunFam" id="3.30.200.20:FF:000046">
    <property type="entry name" value="Mitogen-activated protein kinase"/>
    <property type="match status" value="1"/>
</dbReference>
<dbReference type="Gene3D" id="3.30.200.20">
    <property type="entry name" value="Phosphorylase Kinase, domain 1"/>
    <property type="match status" value="1"/>
</dbReference>
<dbReference type="Gene3D" id="1.10.510.10">
    <property type="entry name" value="Transferase(Phosphotransferase) domain 1"/>
    <property type="match status" value="1"/>
</dbReference>
<dbReference type="InterPro" id="IPR011009">
    <property type="entry name" value="Kinase-like_dom_sf"/>
</dbReference>
<dbReference type="InterPro" id="IPR050117">
    <property type="entry name" value="MAP_kinase"/>
</dbReference>
<dbReference type="InterPro" id="IPR003527">
    <property type="entry name" value="MAP_kinase_CS"/>
</dbReference>
<dbReference type="InterPro" id="IPR008351">
    <property type="entry name" value="MAPK_JNK"/>
</dbReference>
<dbReference type="InterPro" id="IPR000719">
    <property type="entry name" value="Prot_kinase_dom"/>
</dbReference>
<dbReference type="InterPro" id="IPR017441">
    <property type="entry name" value="Protein_kinase_ATP_BS"/>
</dbReference>
<dbReference type="InterPro" id="IPR008271">
    <property type="entry name" value="Ser/Thr_kinase_AS"/>
</dbReference>
<dbReference type="PANTHER" id="PTHR24055">
    <property type="entry name" value="MITOGEN-ACTIVATED PROTEIN KINASE"/>
    <property type="match status" value="1"/>
</dbReference>
<dbReference type="Pfam" id="PF00069">
    <property type="entry name" value="Pkinase"/>
    <property type="match status" value="1"/>
</dbReference>
<dbReference type="PRINTS" id="PR01772">
    <property type="entry name" value="JNKMAPKINASE"/>
</dbReference>
<dbReference type="SMART" id="SM00220">
    <property type="entry name" value="S_TKc"/>
    <property type="match status" value="1"/>
</dbReference>
<dbReference type="SUPFAM" id="SSF56112">
    <property type="entry name" value="Protein kinase-like (PK-like)"/>
    <property type="match status" value="1"/>
</dbReference>
<dbReference type="PROSITE" id="PS01351">
    <property type="entry name" value="MAPK"/>
    <property type="match status" value="1"/>
</dbReference>
<dbReference type="PROSITE" id="PS00107">
    <property type="entry name" value="PROTEIN_KINASE_ATP"/>
    <property type="match status" value="1"/>
</dbReference>
<dbReference type="PROSITE" id="PS50011">
    <property type="entry name" value="PROTEIN_KINASE_DOM"/>
    <property type="match status" value="1"/>
</dbReference>
<dbReference type="PROSITE" id="PS00108">
    <property type="entry name" value="PROTEIN_KINASE_ST"/>
    <property type="match status" value="1"/>
</dbReference>
<accession>A2XFC8</accession>
<accession>Q0PIU7</accession>
<accession>Q7FNE2</accession>
<accession>Q8GZZ3</accession>
<accession>Q8S3T6</accession>
<accession>Q9AXF2</accession>
<accession>Q9FQM3</accession>
<accession>Q9FSE6</accession>
<gene>
    <name type="primary">MPK5</name>
    <name type="synonym">BIMK1</name>
    <name type="synonym">MAPK2</name>
    <name type="synonym">MAPK5</name>
    <name type="synonym">MPK3</name>
    <name type="synonym">MSRMK2</name>
    <name type="ORF">OsI_010771</name>
</gene>
<protein>
    <recommendedName>
        <fullName>Mitogen-activated protein kinase 5</fullName>
        <shortName>MAP kinase 5</shortName>
        <ecNumber>2.7.11.24</ecNumber>
    </recommendedName>
    <alternativeName>
        <fullName>Benzothiadiazole-induced MAP kinase 1</fullName>
    </alternativeName>
    <alternativeName>
        <fullName>MAP kinase 2</fullName>
    </alternativeName>
    <alternativeName>
        <fullName>Multiple stress-responsive MAP kinase 2</fullName>
    </alternativeName>
    <alternativeName>
        <fullName>OsBIMK1</fullName>
    </alternativeName>
    <alternativeName>
        <fullName>OsMAP1</fullName>
    </alternativeName>
    <alternativeName>
        <fullName>OsMAPK2</fullName>
    </alternativeName>
    <alternativeName>
        <fullName>OsMAPK5</fullName>
    </alternativeName>
    <alternativeName>
        <fullName>OsMPK3</fullName>
    </alternativeName>
    <alternativeName>
        <fullName>OsMSRMK2</fullName>
    </alternativeName>
</protein>